<protein>
    <recommendedName>
        <fullName>CBS domain-containing protein CBSCBSPB5</fullName>
    </recommendedName>
</protein>
<proteinExistence type="evidence at protein level"/>
<dbReference type="EMBL" id="AB023037">
    <property type="protein sequence ID" value="BAA96977.1"/>
    <property type="molecule type" value="Genomic_DNA"/>
</dbReference>
<dbReference type="EMBL" id="CP002688">
    <property type="protein sequence ID" value="AED95971.1"/>
    <property type="molecule type" value="Genomic_DNA"/>
</dbReference>
<dbReference type="RefSeq" id="NP_568736.1">
    <property type="nucleotide sequence ID" value="NM_124440.3"/>
</dbReference>
<dbReference type="RefSeq" id="NP_680412.1">
    <property type="nucleotide sequence ID" value="NM_148107.2"/>
</dbReference>
<dbReference type="SMR" id="P0DH79"/>
<dbReference type="FunCoup" id="P0DH79">
    <property type="interactions" value="7"/>
</dbReference>
<dbReference type="STRING" id="3702.P0DH79"/>
<dbReference type="iPTMnet" id="P0DH79"/>
<dbReference type="EnsemblPlants" id="AT5G50530.1">
    <property type="protein sequence ID" value="AT5G50530.1"/>
    <property type="gene ID" value="AT5G50530"/>
</dbReference>
<dbReference type="EnsemblPlants" id="AT5G50640.1">
    <property type="protein sequence ID" value="AT5G50640.1"/>
    <property type="gene ID" value="AT5G50640"/>
</dbReference>
<dbReference type="GeneID" id="835121"/>
<dbReference type="GeneID" id="835133"/>
<dbReference type="Gramene" id="AT5G50530.1">
    <property type="protein sequence ID" value="AT5G50530.1"/>
    <property type="gene ID" value="AT5G50530"/>
</dbReference>
<dbReference type="Gramene" id="AT5G50640.1">
    <property type="protein sequence ID" value="AT5G50640.1"/>
    <property type="gene ID" value="AT5G50640"/>
</dbReference>
<dbReference type="KEGG" id="ath:AT5G50530"/>
<dbReference type="KEGG" id="ath:AT5G50640"/>
<dbReference type="Araport" id="AT5G50640"/>
<dbReference type="TAIR" id="AT5G50640"/>
<dbReference type="HOGENOM" id="CLU_009026_3_0_1"/>
<dbReference type="InParanoid" id="P0DH79"/>
<dbReference type="OMA" id="HIMYEDE"/>
<dbReference type="OrthoDB" id="418595at2759"/>
<dbReference type="PhylomeDB" id="P0DH79"/>
<dbReference type="PRO" id="PR:P0DH79"/>
<dbReference type="Proteomes" id="UP000006548">
    <property type="component" value="Chromosome 5"/>
</dbReference>
<dbReference type="ExpressionAtlas" id="P0DH79">
    <property type="expression patterns" value="baseline and differential"/>
</dbReference>
<dbReference type="GO" id="GO:0016020">
    <property type="term" value="C:membrane"/>
    <property type="evidence" value="ECO:0007669"/>
    <property type="project" value="UniProtKB-SubCell"/>
</dbReference>
<dbReference type="GO" id="GO:0009536">
    <property type="term" value="C:plastid"/>
    <property type="evidence" value="ECO:0007005"/>
    <property type="project" value="TAIR"/>
</dbReference>
<dbReference type="CDD" id="cd17781">
    <property type="entry name" value="CBS_pair_MUG70_1"/>
    <property type="match status" value="1"/>
</dbReference>
<dbReference type="CDD" id="cd17782">
    <property type="entry name" value="CBS_pair_MUG70_2"/>
    <property type="match status" value="1"/>
</dbReference>
<dbReference type="CDD" id="cd06409">
    <property type="entry name" value="PB1_MUG70"/>
    <property type="match status" value="1"/>
</dbReference>
<dbReference type="Gene3D" id="3.10.580.10">
    <property type="entry name" value="CBS-domain"/>
    <property type="match status" value="2"/>
</dbReference>
<dbReference type="Gene3D" id="3.10.20.90">
    <property type="entry name" value="Phosphatidylinositol 3-kinase Catalytic Subunit, Chain A, domain 1"/>
    <property type="match status" value="1"/>
</dbReference>
<dbReference type="InterPro" id="IPR050511">
    <property type="entry name" value="AMPK_gamma/SDS23_families"/>
</dbReference>
<dbReference type="InterPro" id="IPR000644">
    <property type="entry name" value="CBS_dom"/>
</dbReference>
<dbReference type="InterPro" id="IPR046342">
    <property type="entry name" value="CBS_dom_sf"/>
</dbReference>
<dbReference type="InterPro" id="IPR053793">
    <property type="entry name" value="PB1-like"/>
</dbReference>
<dbReference type="InterPro" id="IPR000270">
    <property type="entry name" value="PB1_dom"/>
</dbReference>
<dbReference type="PANTHER" id="PTHR13780">
    <property type="entry name" value="AMP-ACTIVATED PROTEIN KINASE, GAMMA REGULATORY SUBUNIT"/>
    <property type="match status" value="1"/>
</dbReference>
<dbReference type="PANTHER" id="PTHR13780:SF160">
    <property type="entry name" value="CBS DOMAIN-CONTAINING PROTEIN CBSCBSPB4-RELATED"/>
    <property type="match status" value="1"/>
</dbReference>
<dbReference type="Pfam" id="PF00571">
    <property type="entry name" value="CBS"/>
    <property type="match status" value="4"/>
</dbReference>
<dbReference type="Pfam" id="PF00564">
    <property type="entry name" value="PB1"/>
    <property type="match status" value="1"/>
</dbReference>
<dbReference type="SMART" id="SM00116">
    <property type="entry name" value="CBS"/>
    <property type="match status" value="4"/>
</dbReference>
<dbReference type="SMART" id="SM00666">
    <property type="entry name" value="PB1"/>
    <property type="match status" value="1"/>
</dbReference>
<dbReference type="SUPFAM" id="SSF54277">
    <property type="entry name" value="CAD &amp; PB1 domains"/>
    <property type="match status" value="1"/>
</dbReference>
<dbReference type="SUPFAM" id="SSF54631">
    <property type="entry name" value="CBS-domain pair"/>
    <property type="match status" value="2"/>
</dbReference>
<dbReference type="PROSITE" id="PS51371">
    <property type="entry name" value="CBS"/>
    <property type="match status" value="4"/>
</dbReference>
<dbReference type="PROSITE" id="PS51745">
    <property type="entry name" value="PB1"/>
    <property type="match status" value="1"/>
</dbReference>
<feature type="chain" id="PRO_0000412231" description="CBS domain-containing protein CBSCBSPB5">
    <location>
        <begin position="1"/>
        <end position="548"/>
    </location>
</feature>
<feature type="transmembrane region" description="Helical" evidence="1">
    <location>
        <begin position="521"/>
        <end position="543"/>
    </location>
</feature>
<feature type="domain" description="CBS 1" evidence="2">
    <location>
        <begin position="63"/>
        <end position="126"/>
    </location>
</feature>
<feature type="domain" description="CBS 2" evidence="2">
    <location>
        <begin position="133"/>
        <end position="190"/>
    </location>
</feature>
<feature type="domain" description="CBS 3" evidence="2">
    <location>
        <begin position="233"/>
        <end position="293"/>
    </location>
</feature>
<feature type="domain" description="CBS 4" evidence="2">
    <location>
        <begin position="301"/>
        <end position="358"/>
    </location>
</feature>
<feature type="domain" description="PB1" evidence="3">
    <location>
        <begin position="411"/>
        <end position="498"/>
    </location>
</feature>
<feature type="region of interest" description="Disordered" evidence="4">
    <location>
        <begin position="1"/>
        <end position="58"/>
    </location>
</feature>
<feature type="compositionally biased region" description="Polar residues" evidence="4">
    <location>
        <begin position="1"/>
        <end position="18"/>
    </location>
</feature>
<feature type="compositionally biased region" description="Low complexity" evidence="4">
    <location>
        <begin position="37"/>
        <end position="56"/>
    </location>
</feature>
<feature type="modified residue" description="Phosphoserine" evidence="6">
    <location>
        <position position="18"/>
    </location>
</feature>
<name>Y5064_ARATH</name>
<keyword id="KW-0129">CBS domain</keyword>
<keyword id="KW-0472">Membrane</keyword>
<keyword id="KW-0597">Phosphoprotein</keyword>
<keyword id="KW-1185">Reference proteome</keyword>
<keyword id="KW-0677">Repeat</keyword>
<keyword id="KW-0812">Transmembrane</keyword>
<keyword id="KW-1133">Transmembrane helix</keyword>
<reference key="1">
    <citation type="journal article" date="2000" name="DNA Res.">
        <title>Structural analysis of Arabidopsis thaliana chromosome 5. X. Sequence features of the regions of 3,076,755 bp covered by sixty P1 and TAC clones.</title>
        <authorList>
            <person name="Sato S."/>
            <person name="Nakamura Y."/>
            <person name="Kaneko T."/>
            <person name="Katoh T."/>
            <person name="Asamizu E."/>
            <person name="Kotani H."/>
            <person name="Tabata S."/>
        </authorList>
    </citation>
    <scope>NUCLEOTIDE SEQUENCE [LARGE SCALE GENOMIC DNA]</scope>
    <source>
        <strain>cv. Columbia</strain>
    </source>
</reference>
<reference key="2">
    <citation type="journal article" date="2017" name="Plant J.">
        <title>Araport11: a complete reannotation of the Arabidopsis thaliana reference genome.</title>
        <authorList>
            <person name="Cheng C.Y."/>
            <person name="Krishnakumar V."/>
            <person name="Chan A.P."/>
            <person name="Thibaud-Nissen F."/>
            <person name="Schobel S."/>
            <person name="Town C.D."/>
        </authorList>
    </citation>
    <scope>GENOME REANNOTATION</scope>
    <source>
        <strain>cv. Columbia</strain>
    </source>
</reference>
<reference key="3">
    <citation type="journal article" date="2009" name="BMC Genomics">
        <title>Genome wide expression analysis of CBS domain containing proteins in Arabidopsis thaliana (L.) Heynh and Oryza sativa L. reveals their developmental and stress regulation.</title>
        <authorList>
            <person name="Kushwaha H.R."/>
            <person name="Singh A.K."/>
            <person name="Sopory S.K."/>
            <person name="Singla-Pareek S.L."/>
            <person name="Pareek A."/>
        </authorList>
    </citation>
    <scope>GENE FAMILY</scope>
    <scope>NOMENCLATURE</scope>
</reference>
<reference key="4">
    <citation type="journal article" date="2009" name="Plant Physiol.">
        <title>Large-scale Arabidopsis phosphoproteome profiling reveals novel chloroplast kinase substrates and phosphorylation networks.</title>
        <authorList>
            <person name="Reiland S."/>
            <person name="Messerli G."/>
            <person name="Baerenfaller K."/>
            <person name="Gerrits B."/>
            <person name="Endler A."/>
            <person name="Grossmann J."/>
            <person name="Gruissem W."/>
            <person name="Baginsky S."/>
        </authorList>
    </citation>
    <scope>PHOSPHORYLATION [LARGE SCALE ANALYSIS] AT SER-18</scope>
    <scope>IDENTIFICATION BY MASS SPECTROMETRY [LARGE SCALE ANALYSIS]</scope>
</reference>
<accession>P0DH79</accession>
<accession>Q9LUF7</accession>
<sequence>MANQGGPSRKSLSFSGHSFQGRKKASENEGGGGGGSDLLPRRSLTSSRSSISLSGERSGERTVKRLRLCKALTVPDSTTLFEACRRMAARRVDALLLTDSNALLCGILTDRDIATKVIAKQLNLEETPVSKVMTKNPVFVLSDTIAVEALQKMVQGKFRHLPVVENGEVIALLDIAKCLYDAIARMERSVEKGKAIAAAVEGVEKNWGTSIAGPNTFMETLRERIFKPSLSTIIPENTKVLKVGLDETVLGVTMKMVEYQSSAAMVMVENKLVGILTSKDILMRVISQNLPQETTTVEKVMTPNPESATVDMAIVEALHIMHNGKFLHLPVLDKDGDVVAVIDVIHITHAAVTTAGSTAGINNETANSMMQKFWDSAMALSPNEDGDETRSEEESMKLSSEIEVTKSFSYPNTFAFKLQDKKGRMHRFMCETQSLTTLITAILQRMGDDIEPDNLPQIMYEDEDNDKVVLASDNDLGAAVEHAKSIGWKGLKLHLDYTEERGHRRGLSSEDMDYDQSNSWAAAYKTVAAGAALAAGLGVLVYLKRNSN</sequence>
<organism>
    <name type="scientific">Arabidopsis thaliana</name>
    <name type="common">Mouse-ear cress</name>
    <dbReference type="NCBI Taxonomy" id="3702"/>
    <lineage>
        <taxon>Eukaryota</taxon>
        <taxon>Viridiplantae</taxon>
        <taxon>Streptophyta</taxon>
        <taxon>Embryophyta</taxon>
        <taxon>Tracheophyta</taxon>
        <taxon>Spermatophyta</taxon>
        <taxon>Magnoliopsida</taxon>
        <taxon>eudicotyledons</taxon>
        <taxon>Gunneridae</taxon>
        <taxon>Pentapetalae</taxon>
        <taxon>rosids</taxon>
        <taxon>malvids</taxon>
        <taxon>Brassicales</taxon>
        <taxon>Brassicaceae</taxon>
        <taxon>Camelineae</taxon>
        <taxon>Arabidopsis</taxon>
    </lineage>
</organism>
<comment type="subcellular location">
    <subcellularLocation>
        <location evidence="5">Membrane</location>
        <topology evidence="5">Single-pass membrane protein</topology>
    </subcellularLocation>
</comment>
<gene>
    <name type="primary">CBSCBSPB5</name>
    <name type="ordered locus">At5g50640</name>
    <name type="ORF">MFB16.3</name>
</gene>
<evidence type="ECO:0000255" key="1"/>
<evidence type="ECO:0000255" key="2">
    <source>
        <dbReference type="PROSITE-ProRule" id="PRU00703"/>
    </source>
</evidence>
<evidence type="ECO:0000255" key="3">
    <source>
        <dbReference type="PROSITE-ProRule" id="PRU01081"/>
    </source>
</evidence>
<evidence type="ECO:0000256" key="4">
    <source>
        <dbReference type="SAM" id="MobiDB-lite"/>
    </source>
</evidence>
<evidence type="ECO:0000305" key="5"/>
<evidence type="ECO:0007744" key="6">
    <source>
    </source>
</evidence>